<keyword id="KW-0256">Endoplasmic reticulum</keyword>
<keyword id="KW-0325">Glycoprotein</keyword>
<keyword id="KW-0328">Glycosyltransferase</keyword>
<keyword id="KW-0472">Membrane</keyword>
<keyword id="KW-1185">Reference proteome</keyword>
<keyword id="KW-0735">Signal-anchor</keyword>
<keyword id="KW-0808">Transferase</keyword>
<keyword id="KW-0812">Transmembrane</keyword>
<keyword id="KW-1133">Transmembrane helix</keyword>
<proteinExistence type="evidence at transcript level"/>
<evidence type="ECO:0000250" key="1">
    <source>
        <dbReference type="UniProtKB" id="Q8NAT1"/>
    </source>
</evidence>
<evidence type="ECO:0000255" key="2"/>
<evidence type="ECO:0000255" key="3">
    <source>
        <dbReference type="PROSITE-ProRule" id="PRU00316"/>
    </source>
</evidence>
<evidence type="ECO:0000305" key="4"/>
<sequence length="590" mass="68031">MSVGTLLNGLLVSIVAALLWKYSKLSEHAALLEEELHMTRQSQELSQAHIDYHVALQALQEHGTRMVCTGKMHTDRICRFDYLCYCSEAEEFVFFHSNSSVMLPNLGSRRFQPALLDLSSVEDHNTQYFNFLELPAATLRFMPKPVFVPDVTLILNRFNPDNLMHVFHDDLLPAFYTMKQFLDSDEDARLVFMEGWEEGPHFELYRLLSNKQPLLKEQLRNFGKLMCFTKSYIGLSKMTTWYQYGFVQPQGPKANILVSGNEIRHFAKVLMEKMNITRAAGGEKDQGNAEDEKPKDEYIVVFSRSTTRLILNEAELIMALAQEFQMRVVTVSLEEQSFPSIVQVISGASMLVSMHGAQLITSLFLPPGAVVVELYPFAVNPDQYTPYRTLASLPGMDLHYIPWRNTEEENTVTHPDRPWEQGGIAHLEKEEQEQIMASKDVPRHLCCRNPEWLFRIYQDTLVDIPSFLEVLQEGVKAKPLLKKSKLSSTLHPGRVRDPQCQTSVQTSNEAKLTVSWQIPWNLKYLKVREVKYEVWIQEQGENTYMPYILPQQNYTFSDNIKPFTTYLVWVRCIFNKNLLGPFADVLMCRT</sequence>
<comment type="function">
    <text evidence="1">O-linked mannose beta-1,4-N-acetylglucosaminyltransferase that transfers UDP-N-acetyl-D-glucosamine to the 4-position of the mannose to generate N-acetyl-D-glucosamine-beta-1,4-O-D-mannosylprotein. Involved in the biosynthesis of the phosphorylated O-mannosyl trisaccharide (N-acetylgalactosamine-beta-3-N-acetylglucosamine-beta-4-(phosphate-6-)mannose), a carbohydrate structure present in alpha-dystroglycan (DAG1), which is required for binding laminin G-like domain-containing extracellular proteins with high affinity (By similarity).</text>
</comment>
<comment type="catalytic activity">
    <reaction evidence="1">
        <text>3-O-(alpha-D-mannosyl)-L-threonyl-[protein] + UDP-N-acetyl-alpha-D-glucosamine = 3-O-(N-acetyl-beta-D-glucosaminyl-(1-&gt;4)-alpha-D-mannosyl)-L-threonyl-[protein] + UDP + H(+)</text>
        <dbReference type="Rhea" id="RHEA:37663"/>
        <dbReference type="Rhea" id="RHEA-COMP:13547"/>
        <dbReference type="Rhea" id="RHEA-COMP:13618"/>
        <dbReference type="ChEBI" id="CHEBI:15378"/>
        <dbReference type="ChEBI" id="CHEBI:57705"/>
        <dbReference type="ChEBI" id="CHEBI:58223"/>
        <dbReference type="ChEBI" id="CHEBI:137323"/>
        <dbReference type="ChEBI" id="CHEBI:137540"/>
        <dbReference type="EC" id="2.4.1.312"/>
    </reaction>
</comment>
<comment type="pathway">
    <text evidence="1">Protein modification; protein glycosylation.</text>
</comment>
<comment type="subcellular location">
    <subcellularLocation>
        <location evidence="1">Endoplasmic reticulum membrane</location>
        <topology evidence="1">Single-pass type II membrane protein</topology>
    </subcellularLocation>
</comment>
<comment type="similarity">
    <text evidence="4">Belongs to the glycosyltransferase 61 family.</text>
</comment>
<feature type="chain" id="PRO_0000249020" description="Protein O-linked-mannose beta-1,4-N-acetylglucosaminyltransferase 2">
    <location>
        <begin position="1"/>
        <end position="590"/>
    </location>
</feature>
<feature type="topological domain" description="Cytoplasmic" evidence="2">
    <location>
        <begin position="1"/>
        <end position="4"/>
    </location>
</feature>
<feature type="transmembrane region" description="Helical; Signal-anchor for type II membrane protein" evidence="2">
    <location>
        <begin position="5"/>
        <end position="25"/>
    </location>
</feature>
<feature type="topological domain" description="Lumenal" evidence="2">
    <location>
        <begin position="26"/>
        <end position="590"/>
    </location>
</feature>
<feature type="domain" description="Fibronectin type-III" evidence="3">
    <location>
        <begin position="494"/>
        <end position="590"/>
    </location>
</feature>
<feature type="glycosylation site" description="N-linked (GlcNAc...) asparagine" evidence="2">
    <location>
        <position position="98"/>
    </location>
</feature>
<feature type="glycosylation site" description="N-linked (GlcNAc...) asparagine" evidence="2">
    <location>
        <position position="275"/>
    </location>
</feature>
<feature type="glycosylation site" description="N-linked (GlcNAc...) asparagine" evidence="2">
    <location>
        <position position="553"/>
    </location>
</feature>
<protein>
    <recommendedName>
        <fullName>Protein O-linked-mannose beta-1,4-N-acetylglucosaminyltransferase 2</fullName>
        <shortName>POMGnT2</shortName>
        <ecNumber evidence="1">2.4.1.312</ecNumber>
    </recommendedName>
    <alternativeName>
        <fullName>Extracellular O-linked N-acetylglucosamine transferase-like</fullName>
    </alternativeName>
    <alternativeName>
        <fullName>Glycosyltransferase-like domain-containing protein 2</fullName>
    </alternativeName>
</protein>
<gene>
    <name type="primary">pomgnt2</name>
    <name type="synonym">ago61</name>
    <name type="synonym">gtdc2</name>
</gene>
<reference key="1">
    <citation type="submission" date="2004-12" db="EMBL/GenBank/DDBJ databases">
        <title>Phylogeny of xylosyltransferases.</title>
        <authorList>
            <person name="Kiefer-Meyer M.C."/>
            <person name="Pagny S."/>
            <person name="Durambure G."/>
            <person name="Faye L."/>
            <person name="Gomord V."/>
            <person name="Mollicone R."/>
            <person name="Oriol R."/>
        </authorList>
    </citation>
    <scope>NUCLEOTIDE SEQUENCE [MRNA]</scope>
</reference>
<organism>
    <name type="scientific">Takifugu rubripes</name>
    <name type="common">Japanese pufferfish</name>
    <name type="synonym">Fugu rubripes</name>
    <dbReference type="NCBI Taxonomy" id="31033"/>
    <lineage>
        <taxon>Eukaryota</taxon>
        <taxon>Metazoa</taxon>
        <taxon>Chordata</taxon>
        <taxon>Craniata</taxon>
        <taxon>Vertebrata</taxon>
        <taxon>Euteleostomi</taxon>
        <taxon>Actinopterygii</taxon>
        <taxon>Neopterygii</taxon>
        <taxon>Teleostei</taxon>
        <taxon>Neoteleostei</taxon>
        <taxon>Acanthomorphata</taxon>
        <taxon>Eupercaria</taxon>
        <taxon>Tetraodontiformes</taxon>
        <taxon>Tetradontoidea</taxon>
        <taxon>Tetraodontidae</taxon>
        <taxon>Takifugu</taxon>
    </lineage>
</organism>
<name>PMGT2_TAKRU</name>
<accession>Q5NDE4</accession>
<dbReference type="EC" id="2.4.1.312" evidence="1"/>
<dbReference type="EMBL" id="AJ868540">
    <property type="protein sequence ID" value="CAI30874.1"/>
    <property type="molecule type" value="mRNA"/>
</dbReference>
<dbReference type="RefSeq" id="NP_001072049.1">
    <property type="nucleotide sequence ID" value="NM_001078581.1"/>
</dbReference>
<dbReference type="SMR" id="Q5NDE4"/>
<dbReference type="FunCoup" id="Q5NDE4">
    <property type="interactions" value="66"/>
</dbReference>
<dbReference type="STRING" id="31033.ENSTRUP00000033869"/>
<dbReference type="CAZy" id="GT61">
    <property type="family name" value="Glycosyltransferase Family 61"/>
</dbReference>
<dbReference type="GlyCosmos" id="Q5NDE4">
    <property type="glycosylation" value="3 sites, No reported glycans"/>
</dbReference>
<dbReference type="GeneID" id="777951"/>
<dbReference type="KEGG" id="tru:777951"/>
<dbReference type="CTD" id="84892"/>
<dbReference type="eggNOG" id="KOG4698">
    <property type="taxonomic scope" value="Eukaryota"/>
</dbReference>
<dbReference type="HOGENOM" id="CLU_020169_0_0_1"/>
<dbReference type="InParanoid" id="Q5NDE4"/>
<dbReference type="OrthoDB" id="529273at2759"/>
<dbReference type="UniPathway" id="UPA00378"/>
<dbReference type="Proteomes" id="UP000005226">
    <property type="component" value="Unplaced"/>
</dbReference>
<dbReference type="GO" id="GO:0005783">
    <property type="term" value="C:endoplasmic reticulum"/>
    <property type="evidence" value="ECO:0000250"/>
    <property type="project" value="UniProtKB"/>
</dbReference>
<dbReference type="GO" id="GO:0005789">
    <property type="term" value="C:endoplasmic reticulum membrane"/>
    <property type="evidence" value="ECO:0007669"/>
    <property type="project" value="UniProtKB-SubCell"/>
</dbReference>
<dbReference type="GO" id="GO:0008375">
    <property type="term" value="F:acetylglucosaminyltransferase activity"/>
    <property type="evidence" value="ECO:0000250"/>
    <property type="project" value="UniProtKB"/>
</dbReference>
<dbReference type="GO" id="GO:0097363">
    <property type="term" value="F:protein O-acetylglucosaminyltransferase activity"/>
    <property type="evidence" value="ECO:0007669"/>
    <property type="project" value="TreeGrafter"/>
</dbReference>
<dbReference type="GO" id="GO:0001764">
    <property type="term" value="P:neuron migration"/>
    <property type="evidence" value="ECO:0000250"/>
    <property type="project" value="UniProtKB"/>
</dbReference>
<dbReference type="GO" id="GO:0006493">
    <property type="term" value="P:protein O-linked glycosylation"/>
    <property type="evidence" value="ECO:0000250"/>
    <property type="project" value="UniProtKB"/>
</dbReference>
<dbReference type="GO" id="GO:0035269">
    <property type="term" value="P:protein O-linked mannosylation"/>
    <property type="evidence" value="ECO:0000250"/>
    <property type="project" value="UniProtKB"/>
</dbReference>
<dbReference type="CDD" id="cd00063">
    <property type="entry name" value="FN3"/>
    <property type="match status" value="1"/>
</dbReference>
<dbReference type="FunFam" id="2.60.40.10:FF:001371">
    <property type="entry name" value="Protein O-linked mannose N-acetylglucosaminyltransferase 2 (beta 1,4-)"/>
    <property type="match status" value="1"/>
</dbReference>
<dbReference type="Gene3D" id="2.60.40.10">
    <property type="entry name" value="Immunoglobulins"/>
    <property type="match status" value="1"/>
</dbReference>
<dbReference type="InterPro" id="IPR003961">
    <property type="entry name" value="FN3_dom"/>
</dbReference>
<dbReference type="InterPro" id="IPR036116">
    <property type="entry name" value="FN3_sf"/>
</dbReference>
<dbReference type="InterPro" id="IPR049625">
    <property type="entry name" value="Glyco_transf_61_cat"/>
</dbReference>
<dbReference type="InterPro" id="IPR007657">
    <property type="entry name" value="Glycosyltransferase_61"/>
</dbReference>
<dbReference type="InterPro" id="IPR013783">
    <property type="entry name" value="Ig-like_fold"/>
</dbReference>
<dbReference type="PANTHER" id="PTHR20961">
    <property type="entry name" value="GLYCOSYLTRANSFERASE"/>
    <property type="match status" value="1"/>
</dbReference>
<dbReference type="PANTHER" id="PTHR20961:SF38">
    <property type="entry name" value="PROTEIN O-LINKED-MANNOSE BETA-1,4-N-ACETYLGLUCOSAMINYLTRANSFERASE 2"/>
    <property type="match status" value="1"/>
</dbReference>
<dbReference type="Pfam" id="PF04577">
    <property type="entry name" value="Glyco_transf_61"/>
    <property type="match status" value="1"/>
</dbReference>
<dbReference type="SUPFAM" id="SSF49265">
    <property type="entry name" value="Fibronectin type III"/>
    <property type="match status" value="1"/>
</dbReference>
<dbReference type="PROSITE" id="PS50853">
    <property type="entry name" value="FN3"/>
    <property type="match status" value="1"/>
</dbReference>